<sequence>MLIHLQKVCPSEQVDHLRDLIGQGGFVDGGTTAGQVARAVKANEQLEAGARVDTVRSEVRKALMAHAGFVSFARPKTLSRILVSRYRDGMAYGPHIDDALMGGRRADLSFTLFLSDPDSYDGGELVMDGPDGETEIKLAAGDAVVYATSAIHQVAPVTRGERVAVVGWVRSLVRRPDQREILFDLDQVSAALFARDGKTRELDLVLKTKANLLRQWAED</sequence>
<keyword id="KW-0223">Dioxygenase</keyword>
<keyword id="KW-0408">Iron</keyword>
<keyword id="KW-0479">Metal-binding</keyword>
<keyword id="KW-0560">Oxidoreductase</keyword>
<keyword id="KW-1185">Reference proteome</keyword>
<keyword id="KW-0847">Vitamin C</keyword>
<comment type="cofactor">
    <cofactor evidence="1">
        <name>Fe(2+)</name>
        <dbReference type="ChEBI" id="CHEBI:29033"/>
    </cofactor>
    <text evidence="1">Binds 1 Fe(2+) ion per subunit.</text>
</comment>
<comment type="cofactor">
    <cofactor evidence="1">
        <name>L-ascorbate</name>
        <dbReference type="ChEBI" id="CHEBI:38290"/>
    </cofactor>
</comment>
<dbReference type="EC" id="1.14.11.-" evidence="1"/>
<dbReference type="EMBL" id="CP000449">
    <property type="protein sequence ID" value="ABI65967.1"/>
    <property type="molecule type" value="Genomic_DNA"/>
</dbReference>
<dbReference type="RefSeq" id="WP_011643614.1">
    <property type="nucleotide sequence ID" value="NC_008347.1"/>
</dbReference>
<dbReference type="SMR" id="Q0AP20"/>
<dbReference type="STRING" id="394221.Mmar10_1675"/>
<dbReference type="KEGG" id="mmr:Mmar10_1675"/>
<dbReference type="eggNOG" id="COG3128">
    <property type="taxonomic scope" value="Bacteria"/>
</dbReference>
<dbReference type="HOGENOM" id="CLU_106663_0_0_5"/>
<dbReference type="OrthoDB" id="9812472at2"/>
<dbReference type="Proteomes" id="UP000001964">
    <property type="component" value="Chromosome"/>
</dbReference>
<dbReference type="GO" id="GO:0016706">
    <property type="term" value="F:2-oxoglutarate-dependent dioxygenase activity"/>
    <property type="evidence" value="ECO:0007669"/>
    <property type="project" value="UniProtKB-UniRule"/>
</dbReference>
<dbReference type="GO" id="GO:0005506">
    <property type="term" value="F:iron ion binding"/>
    <property type="evidence" value="ECO:0007669"/>
    <property type="project" value="UniProtKB-UniRule"/>
</dbReference>
<dbReference type="GO" id="GO:0031418">
    <property type="term" value="F:L-ascorbic acid binding"/>
    <property type="evidence" value="ECO:0007669"/>
    <property type="project" value="UniProtKB-KW"/>
</dbReference>
<dbReference type="GO" id="GO:0006974">
    <property type="term" value="P:DNA damage response"/>
    <property type="evidence" value="ECO:0007669"/>
    <property type="project" value="TreeGrafter"/>
</dbReference>
<dbReference type="GO" id="GO:0006879">
    <property type="term" value="P:intracellular iron ion homeostasis"/>
    <property type="evidence" value="ECO:0007669"/>
    <property type="project" value="TreeGrafter"/>
</dbReference>
<dbReference type="Gene3D" id="2.60.120.620">
    <property type="entry name" value="q2cbj1_9rhob like domain"/>
    <property type="match status" value="1"/>
</dbReference>
<dbReference type="Gene3D" id="4.10.860.20">
    <property type="entry name" value="Rabenosyn, Rab binding domain"/>
    <property type="match status" value="1"/>
</dbReference>
<dbReference type="HAMAP" id="MF_00657">
    <property type="entry name" value="Hydroxyl_YbiX"/>
    <property type="match status" value="1"/>
</dbReference>
<dbReference type="InterPro" id="IPR005123">
    <property type="entry name" value="Oxoglu/Fe-dep_dioxygenase_dom"/>
</dbReference>
<dbReference type="InterPro" id="IPR041097">
    <property type="entry name" value="PKHD_C"/>
</dbReference>
<dbReference type="InterPro" id="IPR023550">
    <property type="entry name" value="PKHD_hydroxylase"/>
</dbReference>
<dbReference type="InterPro" id="IPR006620">
    <property type="entry name" value="Pro_4_hyd_alph"/>
</dbReference>
<dbReference type="InterPro" id="IPR044862">
    <property type="entry name" value="Pro_4_hyd_alph_FE2OG_OXY"/>
</dbReference>
<dbReference type="NCBIfam" id="NF003974">
    <property type="entry name" value="PRK05467.1-3"/>
    <property type="match status" value="1"/>
</dbReference>
<dbReference type="NCBIfam" id="NF003975">
    <property type="entry name" value="PRK05467.1-4"/>
    <property type="match status" value="1"/>
</dbReference>
<dbReference type="PANTHER" id="PTHR41536">
    <property type="entry name" value="PKHD-TYPE HYDROXYLASE YBIX"/>
    <property type="match status" value="1"/>
</dbReference>
<dbReference type="PANTHER" id="PTHR41536:SF1">
    <property type="entry name" value="PKHD-TYPE HYDROXYLASE YBIX"/>
    <property type="match status" value="1"/>
</dbReference>
<dbReference type="Pfam" id="PF13640">
    <property type="entry name" value="2OG-FeII_Oxy_3"/>
    <property type="match status" value="1"/>
</dbReference>
<dbReference type="Pfam" id="PF18331">
    <property type="entry name" value="PKHD_C"/>
    <property type="match status" value="1"/>
</dbReference>
<dbReference type="SMART" id="SM00702">
    <property type="entry name" value="P4Hc"/>
    <property type="match status" value="1"/>
</dbReference>
<dbReference type="PROSITE" id="PS51471">
    <property type="entry name" value="FE2OG_OXY"/>
    <property type="match status" value="1"/>
</dbReference>
<gene>
    <name type="ordered locus">Mmar10_1675</name>
</gene>
<evidence type="ECO:0000255" key="1">
    <source>
        <dbReference type="HAMAP-Rule" id="MF_00657"/>
    </source>
</evidence>
<name>Y1675_MARMM</name>
<accession>Q0AP20</accession>
<organism>
    <name type="scientific">Maricaulis maris (strain MCS10)</name>
    <name type="common">Caulobacter maris</name>
    <dbReference type="NCBI Taxonomy" id="394221"/>
    <lineage>
        <taxon>Bacteria</taxon>
        <taxon>Pseudomonadati</taxon>
        <taxon>Pseudomonadota</taxon>
        <taxon>Alphaproteobacteria</taxon>
        <taxon>Maricaulales</taxon>
        <taxon>Maricaulaceae</taxon>
        <taxon>Maricaulis</taxon>
    </lineage>
</organism>
<protein>
    <recommendedName>
        <fullName evidence="1">PKHD-type hydroxylase Mmar10_1675</fullName>
        <ecNumber evidence="1">1.14.11.-</ecNumber>
    </recommendedName>
</protein>
<feature type="chain" id="PRO_0000346490" description="PKHD-type hydroxylase Mmar10_1675">
    <location>
        <begin position="1"/>
        <end position="219"/>
    </location>
</feature>
<feature type="domain" description="Fe2OG dioxygenase" evidence="1">
    <location>
        <begin position="77"/>
        <end position="171"/>
    </location>
</feature>
<feature type="binding site" evidence="1">
    <location>
        <position position="95"/>
    </location>
    <ligand>
        <name>Fe cation</name>
        <dbReference type="ChEBI" id="CHEBI:24875"/>
    </ligand>
</feature>
<feature type="binding site" evidence="1">
    <location>
        <position position="97"/>
    </location>
    <ligand>
        <name>Fe cation</name>
        <dbReference type="ChEBI" id="CHEBI:24875"/>
    </ligand>
</feature>
<feature type="binding site" evidence="1">
    <location>
        <position position="152"/>
    </location>
    <ligand>
        <name>Fe cation</name>
        <dbReference type="ChEBI" id="CHEBI:24875"/>
    </ligand>
</feature>
<feature type="binding site" evidence="1">
    <location>
        <position position="162"/>
    </location>
    <ligand>
        <name>2-oxoglutarate</name>
        <dbReference type="ChEBI" id="CHEBI:16810"/>
    </ligand>
</feature>
<reference key="1">
    <citation type="submission" date="2006-08" db="EMBL/GenBank/DDBJ databases">
        <title>Complete sequence of Maricaulis maris MCS10.</title>
        <authorList>
            <consortium name="US DOE Joint Genome Institute"/>
            <person name="Copeland A."/>
            <person name="Lucas S."/>
            <person name="Lapidus A."/>
            <person name="Barry K."/>
            <person name="Detter J.C."/>
            <person name="Glavina del Rio T."/>
            <person name="Hammon N."/>
            <person name="Israni S."/>
            <person name="Dalin E."/>
            <person name="Tice H."/>
            <person name="Pitluck S."/>
            <person name="Saunders E."/>
            <person name="Brettin T."/>
            <person name="Bruce D."/>
            <person name="Han C."/>
            <person name="Tapia R."/>
            <person name="Gilna P."/>
            <person name="Schmutz J."/>
            <person name="Larimer F."/>
            <person name="Land M."/>
            <person name="Hauser L."/>
            <person name="Kyrpides N."/>
            <person name="Mikhailova N."/>
            <person name="Viollier P."/>
            <person name="Stephens C."/>
            <person name="Richardson P."/>
        </authorList>
    </citation>
    <scope>NUCLEOTIDE SEQUENCE [LARGE SCALE GENOMIC DNA]</scope>
    <source>
        <strain>MCS10</strain>
    </source>
</reference>
<proteinExistence type="inferred from homology"/>